<reference key="1">
    <citation type="submission" date="2001-07" db="EMBL/GenBank/DDBJ databases">
        <title>Genome-wide discovery and analysis of human seven transmembrane helix receptor genes.</title>
        <authorList>
            <person name="Suwa M."/>
            <person name="Sato T."/>
            <person name="Okouchi I."/>
            <person name="Arita M."/>
            <person name="Futami K."/>
            <person name="Matsumoto S."/>
            <person name="Tsutsumi S."/>
            <person name="Aburatani H."/>
            <person name="Asai K."/>
            <person name="Akiyama Y."/>
        </authorList>
    </citation>
    <scope>NUCLEOTIDE SEQUENCE [GENOMIC DNA]</scope>
</reference>
<reference key="2">
    <citation type="submission" date="2005-07" db="EMBL/GenBank/DDBJ databases">
        <authorList>
            <person name="Mural R.J."/>
            <person name="Istrail S."/>
            <person name="Sutton G.G."/>
            <person name="Florea L."/>
            <person name="Halpern A.L."/>
            <person name="Mobarry C.M."/>
            <person name="Lippert R."/>
            <person name="Walenz B."/>
            <person name="Shatkay H."/>
            <person name="Dew I."/>
            <person name="Miller J.R."/>
            <person name="Flanigan M.J."/>
            <person name="Edwards N.J."/>
            <person name="Bolanos R."/>
            <person name="Fasulo D."/>
            <person name="Halldorsson B.V."/>
            <person name="Hannenhalli S."/>
            <person name="Turner R."/>
            <person name="Yooseph S."/>
            <person name="Lu F."/>
            <person name="Nusskern D.R."/>
            <person name="Shue B.C."/>
            <person name="Zheng X.H."/>
            <person name="Zhong F."/>
            <person name="Delcher A.L."/>
            <person name="Huson D.H."/>
            <person name="Kravitz S.A."/>
            <person name="Mouchard L."/>
            <person name="Reinert K."/>
            <person name="Remington K.A."/>
            <person name="Clark A.G."/>
            <person name="Waterman M.S."/>
            <person name="Eichler E.E."/>
            <person name="Adams M.D."/>
            <person name="Hunkapiller M.W."/>
            <person name="Myers E.W."/>
            <person name="Venter J.C."/>
        </authorList>
    </citation>
    <scope>NUCLEOTIDE SEQUENCE [LARGE SCALE GENOMIC DNA]</scope>
    <scope>VARIANT ARG-123</scope>
</reference>
<reference key="3">
    <citation type="journal article" date="2002" name="Genomics">
        <title>DEFOG: a practical scheme for deciphering families of genes.</title>
        <authorList>
            <person name="Fuchs T."/>
            <person name="Malecova B."/>
            <person name="Linhart C."/>
            <person name="Sharan R."/>
            <person name="Khen M."/>
            <person name="Herwig R."/>
            <person name="Shmulevich D."/>
            <person name="Elkon R."/>
            <person name="Steinfath M."/>
            <person name="O'Brien J.K."/>
            <person name="Radelof U."/>
            <person name="Lehrach H."/>
            <person name="Lancet D."/>
            <person name="Shamir R."/>
        </authorList>
    </citation>
    <scope>NUCLEOTIDE SEQUENCE [GENOMIC DNA] OF 68-284</scope>
    <scope>VARIANT ARG-123</scope>
</reference>
<reference key="4">
    <citation type="journal article" date="2004" name="Proc. Natl. Acad. Sci. U.S.A.">
        <title>The human olfactory receptor gene family.</title>
        <authorList>
            <person name="Malnic B."/>
            <person name="Godfrey P.A."/>
            <person name="Buck L.B."/>
        </authorList>
    </citation>
    <scope>IDENTIFICATION</scope>
</reference>
<reference key="5">
    <citation type="journal article" date="2004" name="Proc. Natl. Acad. Sci. U.S.A.">
        <authorList>
            <person name="Malnic B."/>
            <person name="Godfrey P.A."/>
            <person name="Buck L.B."/>
        </authorList>
    </citation>
    <scope>ERRATUM OF PUBMED:14983052</scope>
</reference>
<feature type="chain" id="PRO_0000150718" description="Olfactory receptor 10V1">
    <location>
        <begin position="1"/>
        <end position="309"/>
    </location>
</feature>
<feature type="topological domain" description="Extracellular" evidence="1">
    <location>
        <begin position="1"/>
        <end position="25"/>
    </location>
</feature>
<feature type="transmembrane region" description="Helical; Name=1" evidence="1">
    <location>
        <begin position="26"/>
        <end position="46"/>
    </location>
</feature>
<feature type="topological domain" description="Cytoplasmic" evidence="1">
    <location>
        <begin position="47"/>
        <end position="54"/>
    </location>
</feature>
<feature type="transmembrane region" description="Helical; Name=2" evidence="1">
    <location>
        <begin position="55"/>
        <end position="75"/>
    </location>
</feature>
<feature type="topological domain" description="Extracellular" evidence="1">
    <location>
        <begin position="76"/>
        <end position="100"/>
    </location>
</feature>
<feature type="transmembrane region" description="Helical; Name=3" evidence="1">
    <location>
        <begin position="101"/>
        <end position="121"/>
    </location>
</feature>
<feature type="topological domain" description="Cytoplasmic" evidence="1">
    <location>
        <begin position="122"/>
        <end position="140"/>
    </location>
</feature>
<feature type="transmembrane region" description="Helical; Name=4" evidence="1">
    <location>
        <begin position="141"/>
        <end position="161"/>
    </location>
</feature>
<feature type="topological domain" description="Extracellular" evidence="1">
    <location>
        <begin position="162"/>
        <end position="198"/>
    </location>
</feature>
<feature type="transmembrane region" description="Helical; Name=5" evidence="1">
    <location>
        <begin position="199"/>
        <end position="218"/>
    </location>
</feature>
<feature type="topological domain" description="Cytoplasmic" evidence="1">
    <location>
        <begin position="219"/>
        <end position="238"/>
    </location>
</feature>
<feature type="transmembrane region" description="Helical; Name=6" evidence="1">
    <location>
        <begin position="239"/>
        <end position="259"/>
    </location>
</feature>
<feature type="topological domain" description="Extracellular" evidence="1">
    <location>
        <begin position="260"/>
        <end position="272"/>
    </location>
</feature>
<feature type="transmembrane region" description="Helical; Name=7" evidence="1">
    <location>
        <begin position="273"/>
        <end position="293"/>
    </location>
</feature>
<feature type="topological domain" description="Cytoplasmic" evidence="1">
    <location>
        <begin position="294"/>
        <end position="309"/>
    </location>
</feature>
<feature type="glycosylation site" description="N-linked (GlcNAc...) asparagine" evidence="1">
    <location>
        <position position="5"/>
    </location>
</feature>
<feature type="disulfide bond" evidence="2">
    <location>
        <begin position="98"/>
        <end position="190"/>
    </location>
</feature>
<feature type="sequence variant" id="VAR_048065" description="In dbSNP:rs472177.">
    <original>V</original>
    <variation>A</variation>
    <location>
        <position position="117"/>
    </location>
</feature>
<feature type="sequence variant" id="VAR_034296" description="In dbSNP:rs499033." evidence="3 4">
    <original>Q</original>
    <variation>R</variation>
    <location>
        <position position="123"/>
    </location>
</feature>
<evidence type="ECO:0000255" key="1"/>
<evidence type="ECO:0000255" key="2">
    <source>
        <dbReference type="PROSITE-ProRule" id="PRU00521"/>
    </source>
</evidence>
<evidence type="ECO:0000269" key="3">
    <source>
    </source>
</evidence>
<evidence type="ECO:0000269" key="4">
    <source ref="2"/>
</evidence>
<evidence type="ECO:0000305" key="5"/>
<gene>
    <name type="primary">OR10V1</name>
</gene>
<name>O10V1_HUMAN</name>
<protein>
    <recommendedName>
        <fullName>Olfactory receptor 10V1</fullName>
    </recommendedName>
    <alternativeName>
        <fullName>Olfactory receptor OR11-256</fullName>
    </alternativeName>
</protein>
<accession>Q8NGI7</accession>
<accession>Q6IFD9</accession>
<accession>Q96R50</accession>
<proteinExistence type="inferred from homology"/>
<keyword id="KW-1003">Cell membrane</keyword>
<keyword id="KW-1015">Disulfide bond</keyword>
<keyword id="KW-0297">G-protein coupled receptor</keyword>
<keyword id="KW-0325">Glycoprotein</keyword>
<keyword id="KW-0472">Membrane</keyword>
<keyword id="KW-0552">Olfaction</keyword>
<keyword id="KW-0675">Receptor</keyword>
<keyword id="KW-1185">Reference proteome</keyword>
<keyword id="KW-0716">Sensory transduction</keyword>
<keyword id="KW-0807">Transducer</keyword>
<keyword id="KW-0812">Transmembrane</keyword>
<keyword id="KW-1133">Transmembrane helix</keyword>
<comment type="function">
    <text evidence="5">Odorant receptor.</text>
</comment>
<comment type="subcellular location">
    <subcellularLocation>
        <location>Cell membrane</location>
        <topology>Multi-pass membrane protein</topology>
    </subcellularLocation>
</comment>
<comment type="similarity">
    <text evidence="2">Belongs to the G-protein coupled receptor 1 family.</text>
</comment>
<comment type="online information" name="Human Olfactory Receptor Data Exploratorium (HORDE)">
    <link uri="https://genome.weizmann.ac.il/horde/card/index/symbol:OR10V1/term:OR10V1/type:keyword"/>
</comment>
<organism>
    <name type="scientific">Homo sapiens</name>
    <name type="common">Human</name>
    <dbReference type="NCBI Taxonomy" id="9606"/>
    <lineage>
        <taxon>Eukaryota</taxon>
        <taxon>Metazoa</taxon>
        <taxon>Chordata</taxon>
        <taxon>Craniata</taxon>
        <taxon>Vertebrata</taxon>
        <taxon>Euteleostomi</taxon>
        <taxon>Mammalia</taxon>
        <taxon>Eutheria</taxon>
        <taxon>Euarchontoglires</taxon>
        <taxon>Primates</taxon>
        <taxon>Haplorrhini</taxon>
        <taxon>Catarrhini</taxon>
        <taxon>Hominidae</taxon>
        <taxon>Homo</taxon>
    </lineage>
</organism>
<dbReference type="EMBL" id="AB065807">
    <property type="protein sequence ID" value="BAC06026.1"/>
    <property type="molecule type" value="Genomic_DNA"/>
</dbReference>
<dbReference type="EMBL" id="CH471076">
    <property type="protein sequence ID" value="EAW73852.1"/>
    <property type="molecule type" value="Genomic_DNA"/>
</dbReference>
<dbReference type="EMBL" id="AF399593">
    <property type="protein sequence ID" value="AAK95078.1"/>
    <property type="molecule type" value="Genomic_DNA"/>
</dbReference>
<dbReference type="EMBL" id="BK004323">
    <property type="protein sequence ID" value="DAA04721.1"/>
    <property type="molecule type" value="Genomic_DNA"/>
</dbReference>
<dbReference type="CCDS" id="CCDS31565.1"/>
<dbReference type="RefSeq" id="NP_001005324.1">
    <property type="nucleotide sequence ID" value="NM_001005324.1"/>
</dbReference>
<dbReference type="SMR" id="Q8NGI7"/>
<dbReference type="BioGRID" id="133442">
    <property type="interactions" value="1"/>
</dbReference>
<dbReference type="FunCoup" id="Q8NGI7">
    <property type="interactions" value="417"/>
</dbReference>
<dbReference type="STRING" id="9606.ENSP00000302199"/>
<dbReference type="GlyCosmos" id="Q8NGI7">
    <property type="glycosylation" value="1 site, No reported glycans"/>
</dbReference>
<dbReference type="GlyGen" id="Q8NGI7">
    <property type="glycosylation" value="1 site"/>
</dbReference>
<dbReference type="BioMuta" id="OR10V1"/>
<dbReference type="DMDM" id="116242686"/>
<dbReference type="MassIVE" id="Q8NGI7"/>
<dbReference type="PaxDb" id="9606-ENSP00000302199"/>
<dbReference type="Antibodypedia" id="58855">
    <property type="antibodies" value="97 antibodies from 20 providers"/>
</dbReference>
<dbReference type="DNASU" id="390201"/>
<dbReference type="Ensembl" id="ENST00000307552.3">
    <property type="protein sequence ID" value="ENSP00000302199.2"/>
    <property type="gene ID" value="ENSG00000172289.3"/>
</dbReference>
<dbReference type="GeneID" id="390201"/>
<dbReference type="KEGG" id="hsa:390201"/>
<dbReference type="MANE-Select" id="ENST00000307552.3">
    <property type="protein sequence ID" value="ENSP00000302199.2"/>
    <property type="RefSeq nucleotide sequence ID" value="NM_001005324.1"/>
    <property type="RefSeq protein sequence ID" value="NP_001005324.1"/>
</dbReference>
<dbReference type="UCSC" id="uc001nof.2">
    <property type="organism name" value="human"/>
</dbReference>
<dbReference type="AGR" id="HGNC:15136"/>
<dbReference type="CTD" id="390201"/>
<dbReference type="GeneCards" id="OR10V1"/>
<dbReference type="HGNC" id="HGNC:15136">
    <property type="gene designation" value="OR10V1"/>
</dbReference>
<dbReference type="HPA" id="ENSG00000172289">
    <property type="expression patterns" value="Not detected"/>
</dbReference>
<dbReference type="neXtProt" id="NX_Q8NGI7"/>
<dbReference type="PharmGKB" id="PA32003"/>
<dbReference type="VEuPathDB" id="HostDB:ENSG00000172289"/>
<dbReference type="eggNOG" id="ENOG502SKMP">
    <property type="taxonomic scope" value="Eukaryota"/>
</dbReference>
<dbReference type="GeneTree" id="ENSGT01090000260045"/>
<dbReference type="HOGENOM" id="CLU_012526_1_2_1"/>
<dbReference type="InParanoid" id="Q8NGI7"/>
<dbReference type="OMA" id="WPLCVEL"/>
<dbReference type="OrthoDB" id="9975554at2759"/>
<dbReference type="PAN-GO" id="Q8NGI7">
    <property type="GO annotations" value="2 GO annotations based on evolutionary models"/>
</dbReference>
<dbReference type="PhylomeDB" id="Q8NGI7"/>
<dbReference type="TreeFam" id="TF352734"/>
<dbReference type="PathwayCommons" id="Q8NGI7"/>
<dbReference type="Reactome" id="R-HSA-9752946">
    <property type="pathway name" value="Expression and translocation of olfactory receptors"/>
</dbReference>
<dbReference type="BioGRID-ORCS" id="390201">
    <property type="hits" value="17 hits in 743 CRISPR screens"/>
</dbReference>
<dbReference type="GeneWiki" id="OR10V1"/>
<dbReference type="GenomeRNAi" id="390201"/>
<dbReference type="Pharos" id="Q8NGI7">
    <property type="development level" value="Tdark"/>
</dbReference>
<dbReference type="PRO" id="PR:Q8NGI7"/>
<dbReference type="Proteomes" id="UP000005640">
    <property type="component" value="Chromosome 11"/>
</dbReference>
<dbReference type="RNAct" id="Q8NGI7">
    <property type="molecule type" value="protein"/>
</dbReference>
<dbReference type="Bgee" id="ENSG00000172289">
    <property type="expression patterns" value="Expressed in urinary bladder"/>
</dbReference>
<dbReference type="GO" id="GO:0005886">
    <property type="term" value="C:plasma membrane"/>
    <property type="evidence" value="ECO:0007669"/>
    <property type="project" value="UniProtKB-SubCell"/>
</dbReference>
<dbReference type="GO" id="GO:0004930">
    <property type="term" value="F:G protein-coupled receptor activity"/>
    <property type="evidence" value="ECO:0007669"/>
    <property type="project" value="UniProtKB-KW"/>
</dbReference>
<dbReference type="GO" id="GO:0005549">
    <property type="term" value="F:odorant binding"/>
    <property type="evidence" value="ECO:0000318"/>
    <property type="project" value="GO_Central"/>
</dbReference>
<dbReference type="GO" id="GO:0004984">
    <property type="term" value="F:olfactory receptor activity"/>
    <property type="evidence" value="ECO:0000318"/>
    <property type="project" value="GO_Central"/>
</dbReference>
<dbReference type="CDD" id="cd15225">
    <property type="entry name" value="7tmA_OR10A-like"/>
    <property type="match status" value="1"/>
</dbReference>
<dbReference type="FunFam" id="1.10.1220.70:FF:000001">
    <property type="entry name" value="Olfactory receptor"/>
    <property type="match status" value="1"/>
</dbReference>
<dbReference type="FunFam" id="1.20.1070.10:FF:000001">
    <property type="entry name" value="Olfactory receptor"/>
    <property type="match status" value="1"/>
</dbReference>
<dbReference type="Gene3D" id="1.20.1070.10">
    <property type="entry name" value="Rhodopsin 7-helix transmembrane proteins"/>
    <property type="match status" value="1"/>
</dbReference>
<dbReference type="InterPro" id="IPR000276">
    <property type="entry name" value="GPCR_Rhodpsn"/>
</dbReference>
<dbReference type="InterPro" id="IPR017452">
    <property type="entry name" value="GPCR_Rhodpsn_7TM"/>
</dbReference>
<dbReference type="InterPro" id="IPR000725">
    <property type="entry name" value="Olfact_rcpt"/>
</dbReference>
<dbReference type="PANTHER" id="PTHR26453">
    <property type="entry name" value="OLFACTORY RECEPTOR"/>
    <property type="match status" value="1"/>
</dbReference>
<dbReference type="Pfam" id="PF13853">
    <property type="entry name" value="7tm_4"/>
    <property type="match status" value="1"/>
</dbReference>
<dbReference type="PRINTS" id="PR00237">
    <property type="entry name" value="GPCRRHODOPSN"/>
</dbReference>
<dbReference type="PRINTS" id="PR00245">
    <property type="entry name" value="OLFACTORYR"/>
</dbReference>
<dbReference type="SUPFAM" id="SSF81321">
    <property type="entry name" value="Family A G protein-coupled receptor-like"/>
    <property type="match status" value="1"/>
</dbReference>
<dbReference type="PROSITE" id="PS50262">
    <property type="entry name" value="G_PROTEIN_RECEP_F1_2"/>
    <property type="match status" value="1"/>
</dbReference>
<sequence length="309" mass="34746">MEGINKTAKMQFFFRPFSPDPEVQMLIFVVFLMMYLTSLGGNATIAVIVQINHSLHTPMYFFLANLAVLEIFYTSSITPLALANLLSMGKTPVSITGCGTQMFFFVFLGGADCVLLVVMAYDQFIAICHPLRYRLIMSWSLCVELLVGSLVLGFLLSLPLTILIFHLPFCHNDEIYHFYCDMPAVMRLACADTRVHKTALYIISFIVLSIPLSLISISYVFIVVAILRIRSAEGRQQAYSTCSSHILVVLLQYGCTSFIYLSPSSSYSPEMGRVVSVAYTFITPILNPLIYSLRNKELKDALRKALRKF</sequence>